<evidence type="ECO:0000250" key="1"/>
<evidence type="ECO:0000305" key="2"/>
<gene>
    <name type="primary">tfdC</name>
    <name type="synonym">tfdCI</name>
    <name type="ordered locus">Reut_D6466</name>
</gene>
<accession>P0A396</accession>
<accession>P05403</accession>
<accession>P71131</accession>
<accession>Q46M66</accession>
<reference key="1">
    <citation type="journal article" date="1990" name="J. Bacteriol.">
        <title>Organization and sequence analysis of the 2,4-dichlorophenol hydroxylase and dichlorocatechol oxidative operons of plasmid pJP4.</title>
        <authorList>
            <person name="Perkins E.J."/>
            <person name="Gordon M.P."/>
            <person name="Caceres O."/>
            <person name="Lurquin P.F."/>
        </authorList>
    </citation>
    <scope>NUCLEOTIDE SEQUENCE [GENOMIC DNA]</scope>
    <source>
        <plasmid>pJP4</plasmid>
    </source>
</reference>
<reference key="2">
    <citation type="journal article" date="1988" name="Nucleic Acids Res.">
        <title>Partial nucleotide sequence of the chlorocatechol degradative operon tfdCDEF of pJP4 and similarity to promoters of the chlorinated aromatic degradative operons tfdA and clcABD.</title>
        <authorList>
            <person name="Perkins E.J."/>
            <person name="Bolton G."/>
            <person name="Gordon M.P."/>
            <person name="Lurquin P.F."/>
        </authorList>
    </citation>
    <scope>NUCLEOTIDE SEQUENCE [GENOMIC DNA]</scope>
    <source>
        <plasmid>pJP4</plasmid>
    </source>
</reference>
<reference key="3">
    <citation type="journal article" date="1988" name="Mol. Gen. Genet.">
        <title>Nucleotide homology and organization of chlorocatechol oxidation genes of plasmids pJP4 and pAC27.</title>
        <authorList>
            <person name="Ghosal D."/>
            <person name="You I.-S."/>
        </authorList>
    </citation>
    <scope>NUCLEOTIDE SEQUENCE [GENOMIC DNA]</scope>
    <source>
        <plasmid>pJP4</plasmid>
    </source>
</reference>
<reference key="4">
    <citation type="journal article" date="2004" name="Environ. Microbiol.">
        <title>Genetic organization of the catabolic plasmid pJP4 from Ralstonia eutropha JMP134 (pJP4) reveals mechanisms of adaptation to chloroaromatic pollutants and evolution of specialized chloroaromatic degradation pathways.</title>
        <authorList>
            <person name="Trefault N."/>
            <person name="De la Iglesia R."/>
            <person name="Molina A.M."/>
            <person name="Manzano M."/>
            <person name="Ledger T."/>
            <person name="Perez-Pantoja D."/>
            <person name="Sanchez M.A."/>
            <person name="Stuardo M."/>
            <person name="Gonzalez B."/>
        </authorList>
    </citation>
    <scope>NUCLEOTIDE SEQUENCE [GENOMIC DNA]</scope>
    <source>
        <plasmid>pJP4</plasmid>
    </source>
</reference>
<reference key="5">
    <citation type="journal article" date="2010" name="PLoS ONE">
        <title>The complete multipartite genome sequence of Cupriavidus necator JMP134, a versatile pollutant degrader.</title>
        <authorList>
            <person name="Lykidis A."/>
            <person name="Perez-Pantoja D."/>
            <person name="Ledger T."/>
            <person name="Mavromatis K."/>
            <person name="Anderson I.J."/>
            <person name="Ivanova N.N."/>
            <person name="Hooper S.D."/>
            <person name="Lapidus A."/>
            <person name="Lucas S."/>
            <person name="Gonzalez B."/>
            <person name="Kyrpides N.C."/>
        </authorList>
    </citation>
    <scope>NUCLEOTIDE SEQUENCE [LARGE SCALE GENOMIC DNA]</scope>
    <source>
        <strain>JMP134 / LMG 1197</strain>
        <plasmid>pPJ4</plasmid>
    </source>
</reference>
<name>TFDC_CUPPJ</name>
<comment type="function">
    <text>Preferentially converts 3,5-dichlorocatechol as opposed to other chlorinated catechols. Retains diminished activity toward non-chlorinated substrates.</text>
</comment>
<comment type="catalytic activity">
    <reaction>
        <text>3,5-dichlorocatechol + O2 = (2E,4E)-2,4-dichloromuconate + 2 H(+)</text>
        <dbReference type="Rhea" id="RHEA:48572"/>
        <dbReference type="ChEBI" id="CHEBI:11438"/>
        <dbReference type="ChEBI" id="CHEBI:15378"/>
        <dbReference type="ChEBI" id="CHEBI:15379"/>
        <dbReference type="ChEBI" id="CHEBI:15788"/>
    </reaction>
</comment>
<comment type="cofactor">
    <cofactor>
        <name>Fe(3+)</name>
        <dbReference type="ChEBI" id="CHEBI:29034"/>
    </cofactor>
    <text>Binds 1 Fe(3+) ion per subunit.</text>
</comment>
<comment type="pathway">
    <text>Aromatic compound metabolism; 3-chlorocatechol degradation.</text>
</comment>
<comment type="similarity">
    <text evidence="2">Belongs to the intradiol ring-cleavage dioxygenase family.</text>
</comment>
<feature type="chain" id="PRO_0000085090" description="Chlorocatechol 1,2-dioxygenase">
    <location>
        <begin position="1"/>
        <end position="255"/>
    </location>
</feature>
<feature type="binding site" evidence="1">
    <location>
        <position position="130"/>
    </location>
    <ligand>
        <name>Fe cation</name>
        <dbReference type="ChEBI" id="CHEBI:24875"/>
    </ligand>
</feature>
<feature type="binding site" evidence="1">
    <location>
        <position position="164"/>
    </location>
    <ligand>
        <name>Fe cation</name>
        <dbReference type="ChEBI" id="CHEBI:24875"/>
    </ligand>
</feature>
<feature type="binding site" evidence="1">
    <location>
        <position position="188"/>
    </location>
    <ligand>
        <name>Fe cation</name>
        <dbReference type="ChEBI" id="CHEBI:24875"/>
    </ligand>
</feature>
<feature type="binding site" evidence="1">
    <location>
        <position position="190"/>
    </location>
    <ligand>
        <name>Fe cation</name>
        <dbReference type="ChEBI" id="CHEBI:24875"/>
    </ligand>
</feature>
<feature type="sequence conflict" description="In Ref. 2." evidence="2" ref="2">
    <original>ED</original>
    <variation>DH</variation>
    <location>
        <begin position="115"/>
        <end position="116"/>
    </location>
</feature>
<proteinExistence type="inferred from homology"/>
<protein>
    <recommendedName>
        <fullName>Chlorocatechol 1,2-dioxygenase</fullName>
        <ecNumber>1.13.11.-</ecNumber>
    </recommendedName>
</protein>
<organism>
    <name type="scientific">Cupriavidus pinatubonensis (strain JMP 134 / LMG 1197)</name>
    <name type="common">Cupriavidus necator (strain JMP 134)</name>
    <dbReference type="NCBI Taxonomy" id="264198"/>
    <lineage>
        <taxon>Bacteria</taxon>
        <taxon>Pseudomonadati</taxon>
        <taxon>Pseudomonadota</taxon>
        <taxon>Betaproteobacteria</taxon>
        <taxon>Burkholderiales</taxon>
        <taxon>Burkholderiaceae</taxon>
        <taxon>Cupriavidus</taxon>
    </lineage>
</organism>
<geneLocation type="plasmid">
    <name>pJP4</name>
</geneLocation>
<geneLocation type="plasmid">
    <name>pPJ4</name>
</geneLocation>
<dbReference type="EC" id="1.13.11.-"/>
<dbReference type="EMBL" id="M35097">
    <property type="protein sequence ID" value="AAA98262.1"/>
    <property type="molecule type" value="Genomic_DNA"/>
</dbReference>
<dbReference type="EMBL" id="M36280">
    <property type="protein sequence ID" value="AAA98261.1"/>
    <property type="molecule type" value="Genomic_DNA"/>
</dbReference>
<dbReference type="EMBL" id="AY365053">
    <property type="protein sequence ID" value="AAR31039.1"/>
    <property type="molecule type" value="Genomic_DNA"/>
</dbReference>
<dbReference type="EMBL" id="CP000093">
    <property type="protein sequence ID" value="AAZ65764.1"/>
    <property type="molecule type" value="Genomic_DNA"/>
</dbReference>
<dbReference type="PIR" id="A35255">
    <property type="entry name" value="A35255"/>
</dbReference>
<dbReference type="RefSeq" id="WP_011178386.1">
    <property type="nucleotide sequence ID" value="NZ_AY365053.1"/>
</dbReference>
<dbReference type="SMR" id="P0A396"/>
<dbReference type="KEGG" id="reu:Reut_D6466"/>
<dbReference type="HOGENOM" id="CLU_046727_1_0_4"/>
<dbReference type="OrthoDB" id="9800887at2"/>
<dbReference type="BioCyc" id="MetaCyc:MONOMER-14417"/>
<dbReference type="UniPathway" id="UPA00083"/>
<dbReference type="GO" id="GO:0018576">
    <property type="term" value="F:catechol 1,2-dioxygenase activity"/>
    <property type="evidence" value="ECO:0007669"/>
    <property type="project" value="InterPro"/>
</dbReference>
<dbReference type="GO" id="GO:0008199">
    <property type="term" value="F:ferric iron binding"/>
    <property type="evidence" value="ECO:0007669"/>
    <property type="project" value="InterPro"/>
</dbReference>
<dbReference type="GO" id="GO:0009056">
    <property type="term" value="P:catabolic process"/>
    <property type="evidence" value="ECO:0007669"/>
    <property type="project" value="UniProtKB-KW"/>
</dbReference>
<dbReference type="GO" id="GO:0009712">
    <property type="term" value="P:catechol-containing compound metabolic process"/>
    <property type="evidence" value="ECO:0007669"/>
    <property type="project" value="InterPro"/>
</dbReference>
<dbReference type="CDD" id="cd03462">
    <property type="entry name" value="1_2-CCD"/>
    <property type="match status" value="1"/>
</dbReference>
<dbReference type="Gene3D" id="2.60.130.10">
    <property type="entry name" value="Aromatic compound dioxygenase"/>
    <property type="match status" value="1"/>
</dbReference>
<dbReference type="InterPro" id="IPR007535">
    <property type="entry name" value="Catechol_dOase_N"/>
</dbReference>
<dbReference type="InterPro" id="IPR012817">
    <property type="entry name" value="Chlorcchol_dOase"/>
</dbReference>
<dbReference type="InterPro" id="IPR000627">
    <property type="entry name" value="Intradiol_dOase_C"/>
</dbReference>
<dbReference type="InterPro" id="IPR015889">
    <property type="entry name" value="Intradiol_dOase_core"/>
</dbReference>
<dbReference type="InterPro" id="IPR050770">
    <property type="entry name" value="Intradiol_RC_Dioxygenase"/>
</dbReference>
<dbReference type="NCBIfam" id="TIGR02465">
    <property type="entry name" value="chlorocat_1_2"/>
    <property type="match status" value="1"/>
</dbReference>
<dbReference type="PANTHER" id="PTHR33711">
    <property type="entry name" value="DIOXYGENASE, PUTATIVE (AFU_ORTHOLOGUE AFUA_2G02910)-RELATED"/>
    <property type="match status" value="1"/>
</dbReference>
<dbReference type="PANTHER" id="PTHR33711:SF7">
    <property type="entry name" value="INTRADIOL RING-CLEAVAGE DIOXYGENASES DOMAIN-CONTAINING PROTEIN-RELATED"/>
    <property type="match status" value="1"/>
</dbReference>
<dbReference type="Pfam" id="PF00775">
    <property type="entry name" value="Dioxygenase_C"/>
    <property type="match status" value="1"/>
</dbReference>
<dbReference type="Pfam" id="PF04444">
    <property type="entry name" value="Dioxygenase_N"/>
    <property type="match status" value="1"/>
</dbReference>
<dbReference type="SUPFAM" id="SSF49482">
    <property type="entry name" value="Aromatic compound dioxygenase"/>
    <property type="match status" value="1"/>
</dbReference>
<dbReference type="PROSITE" id="PS00083">
    <property type="entry name" value="INTRADIOL_DIOXYGENAS"/>
    <property type="match status" value="1"/>
</dbReference>
<sequence length="255" mass="28283">MNKRVKDVVDAIVAAVQRVLDQKEVTEAEYRTAVHYLMQVAEQRETALLCDVFFNSTVAATKARISEGSTPAIEGPYYRDDAPLVDDRLKTYDTDDHKPLLIQGTVKAVDGSVVEDVTIDVWHSTPDGKYSGFHDDIPTDFYRGKLRVGTDGSFRVRTTMPVPYQIPDQGPTGALLETMGGHSWRPAHVHFKVKAPGYETLTTQYYFEGGDWITDDCCNGVQSSLITPDIVEEGVRLMNINFVIEPARAQAGANP</sequence>
<keyword id="KW-0058">Aromatic hydrocarbons catabolism</keyword>
<keyword id="KW-0223">Dioxygenase</keyword>
<keyword id="KW-0408">Iron</keyword>
<keyword id="KW-0479">Metal-binding</keyword>
<keyword id="KW-0560">Oxidoreductase</keyword>
<keyword id="KW-0614">Plasmid</keyword>